<keyword id="KW-0343">GTPase activation</keyword>
<keyword id="KW-1185">Reference proteome</keyword>
<keyword id="KW-0690">Ribosome biogenesis</keyword>
<comment type="function">
    <text evidence="1">A GTPase-activating protein (GAP) that modifies Der/EngA GTPase function. May play a role in ribosome biogenesis.</text>
</comment>
<comment type="subunit">
    <text evidence="1">Interacts with Der.</text>
</comment>
<comment type="similarity">
    <text evidence="1">Belongs to the YihI family.</text>
</comment>
<proteinExistence type="inferred from homology"/>
<reference key="1">
    <citation type="journal article" date="2009" name="PLoS Genet.">
        <title>Organised genome dynamics in the Escherichia coli species results in highly diverse adaptive paths.</title>
        <authorList>
            <person name="Touchon M."/>
            <person name="Hoede C."/>
            <person name="Tenaillon O."/>
            <person name="Barbe V."/>
            <person name="Baeriswyl S."/>
            <person name="Bidet P."/>
            <person name="Bingen E."/>
            <person name="Bonacorsi S."/>
            <person name="Bouchier C."/>
            <person name="Bouvet O."/>
            <person name="Calteau A."/>
            <person name="Chiapello H."/>
            <person name="Clermont O."/>
            <person name="Cruveiller S."/>
            <person name="Danchin A."/>
            <person name="Diard M."/>
            <person name="Dossat C."/>
            <person name="Karoui M.E."/>
            <person name="Frapy E."/>
            <person name="Garry L."/>
            <person name="Ghigo J.M."/>
            <person name="Gilles A.M."/>
            <person name="Johnson J."/>
            <person name="Le Bouguenec C."/>
            <person name="Lescat M."/>
            <person name="Mangenot S."/>
            <person name="Martinez-Jehanne V."/>
            <person name="Matic I."/>
            <person name="Nassif X."/>
            <person name="Oztas S."/>
            <person name="Petit M.A."/>
            <person name="Pichon C."/>
            <person name="Rouy Z."/>
            <person name="Ruf C.S."/>
            <person name="Schneider D."/>
            <person name="Tourret J."/>
            <person name="Vacherie B."/>
            <person name="Vallenet D."/>
            <person name="Medigue C."/>
            <person name="Rocha E.P.C."/>
            <person name="Denamur E."/>
        </authorList>
    </citation>
    <scope>NUCLEOTIDE SEQUENCE [LARGE SCALE GENOMIC DNA]</scope>
    <source>
        <strain>S88 / ExPEC</strain>
    </source>
</reference>
<feature type="chain" id="PRO_1000136379" description="Der GTPase-activating protein YihI">
    <location>
        <begin position="1"/>
        <end position="169"/>
    </location>
</feature>
<feature type="region of interest" description="Disordered" evidence="2">
    <location>
        <begin position="1"/>
        <end position="99"/>
    </location>
</feature>
<feature type="region of interest" description="Disordered" evidence="2">
    <location>
        <begin position="146"/>
        <end position="169"/>
    </location>
</feature>
<feature type="compositionally biased region" description="Basic residues" evidence="2">
    <location>
        <begin position="10"/>
        <end position="19"/>
    </location>
</feature>
<feature type="compositionally biased region" description="Basic and acidic residues" evidence="2">
    <location>
        <begin position="20"/>
        <end position="30"/>
    </location>
</feature>
<feature type="compositionally biased region" description="Basic residues" evidence="2">
    <location>
        <begin position="31"/>
        <end position="40"/>
    </location>
</feature>
<feature type="compositionally biased region" description="Polar residues" evidence="2">
    <location>
        <begin position="49"/>
        <end position="58"/>
    </location>
</feature>
<feature type="compositionally biased region" description="Acidic residues" evidence="2">
    <location>
        <begin position="147"/>
        <end position="159"/>
    </location>
</feature>
<feature type="compositionally biased region" description="Basic and acidic residues" evidence="2">
    <location>
        <begin position="160"/>
        <end position="169"/>
    </location>
</feature>
<name>YIHI_ECO45</name>
<sequence length="169" mass="19126">MKPSSSNSRSKGHAKARRKTREELDQEARDRKRQKKRRGHAPGSRAAGGNTTSGSKGQNAPKDPRIGSKTPIPLGVAEKVTKQHKPKSEKPMLSPQAELELLETDERLDALLERLEAGETLRAEEQSWVDVKLDRIDELMQKLGLSYDDDEEEEEDEKQEDMMRLLRGN</sequence>
<accession>B7MHE5</accession>
<dbReference type="EMBL" id="CU928161">
    <property type="protein sequence ID" value="CAR05499.1"/>
    <property type="molecule type" value="Genomic_DNA"/>
</dbReference>
<dbReference type="RefSeq" id="WP_001514389.1">
    <property type="nucleotide sequence ID" value="NC_011742.1"/>
</dbReference>
<dbReference type="SMR" id="B7MHE5"/>
<dbReference type="KEGG" id="ecz:ECS88_4315"/>
<dbReference type="HOGENOM" id="CLU_094104_2_0_6"/>
<dbReference type="Proteomes" id="UP000000747">
    <property type="component" value="Chromosome"/>
</dbReference>
<dbReference type="GO" id="GO:0005096">
    <property type="term" value="F:GTPase activator activity"/>
    <property type="evidence" value="ECO:0007669"/>
    <property type="project" value="UniProtKB-KW"/>
</dbReference>
<dbReference type="GO" id="GO:0042254">
    <property type="term" value="P:ribosome biogenesis"/>
    <property type="evidence" value="ECO:0007669"/>
    <property type="project" value="UniProtKB-KW"/>
</dbReference>
<dbReference type="HAMAP" id="MF_01058">
    <property type="entry name" value="GAP_YihI"/>
    <property type="match status" value="1"/>
</dbReference>
<dbReference type="InterPro" id="IPR007336">
    <property type="entry name" value="YihI"/>
</dbReference>
<dbReference type="NCBIfam" id="NF003560">
    <property type="entry name" value="PRK05244.1-1"/>
    <property type="match status" value="1"/>
</dbReference>
<dbReference type="Pfam" id="PF04220">
    <property type="entry name" value="YihI"/>
    <property type="match status" value="1"/>
</dbReference>
<organism>
    <name type="scientific">Escherichia coli O45:K1 (strain S88 / ExPEC)</name>
    <dbReference type="NCBI Taxonomy" id="585035"/>
    <lineage>
        <taxon>Bacteria</taxon>
        <taxon>Pseudomonadati</taxon>
        <taxon>Pseudomonadota</taxon>
        <taxon>Gammaproteobacteria</taxon>
        <taxon>Enterobacterales</taxon>
        <taxon>Enterobacteriaceae</taxon>
        <taxon>Escherichia</taxon>
    </lineage>
</organism>
<evidence type="ECO:0000255" key="1">
    <source>
        <dbReference type="HAMAP-Rule" id="MF_01058"/>
    </source>
</evidence>
<evidence type="ECO:0000256" key="2">
    <source>
        <dbReference type="SAM" id="MobiDB-lite"/>
    </source>
</evidence>
<protein>
    <recommendedName>
        <fullName evidence="1">Der GTPase-activating protein YihI</fullName>
    </recommendedName>
</protein>
<gene>
    <name evidence="1" type="primary">yihI</name>
    <name type="ordered locus">ECS88_4315</name>
</gene>